<proteinExistence type="inferred from homology"/>
<keyword id="KW-1185">Reference proteome</keyword>
<keyword id="KW-0687">Ribonucleoprotein</keyword>
<keyword id="KW-0689">Ribosomal protein</keyword>
<gene>
    <name type="primary">rpl32e</name>
    <name type="ordered locus">NEQ530</name>
</gene>
<evidence type="ECO:0000256" key="1">
    <source>
        <dbReference type="SAM" id="MobiDB-lite"/>
    </source>
</evidence>
<evidence type="ECO:0000305" key="2"/>
<reference key="1">
    <citation type="journal article" date="2003" name="Proc. Natl. Acad. Sci. U.S.A.">
        <title>The genome of Nanoarchaeum equitans: insights into early archaeal evolution and derived parasitism.</title>
        <authorList>
            <person name="Waters E."/>
            <person name="Hohn M.J."/>
            <person name="Ahel I."/>
            <person name="Graham D.E."/>
            <person name="Adams M.D."/>
            <person name="Barnstead M."/>
            <person name="Beeson K.Y."/>
            <person name="Bibbs L."/>
            <person name="Bolanos R."/>
            <person name="Keller M."/>
            <person name="Kretz K."/>
            <person name="Lin X."/>
            <person name="Mathur E."/>
            <person name="Ni J."/>
            <person name="Podar M."/>
            <person name="Richardson T."/>
            <person name="Sutton G.G."/>
            <person name="Simon M."/>
            <person name="Soell D."/>
            <person name="Stetter K.O."/>
            <person name="Short J.M."/>
            <person name="Noorderwier M."/>
        </authorList>
    </citation>
    <scope>NUCLEOTIDE SEQUENCE [LARGE SCALE GENOMIC DNA]</scope>
    <source>
        <strain>Kin4-M</strain>
    </source>
</reference>
<protein>
    <recommendedName>
        <fullName evidence="2">Large ribosomal subunit protein eL32</fullName>
    </recommendedName>
    <alternativeName>
        <fullName>50S ribosomal protein L32e</fullName>
    </alternativeName>
</protein>
<accession>Q74MV8</accession>
<sequence>MIFKLIIKPKGMGHYLKIRRKLKRKKPEFLRTNWYRKKAFRNDPKWRWGHGRDNKFRLKMKGKPRPPEPGYRSPRKVRGLLPNGLKPVIIHNVEELTKIKEGEIAVIHHAVGKRKRQQILEKAKELSIPIANPVL</sequence>
<dbReference type="EMBL" id="AE017199">
    <property type="protein sequence ID" value="AAR39372.1"/>
    <property type="molecule type" value="Genomic_DNA"/>
</dbReference>
<dbReference type="SMR" id="Q74MV8"/>
<dbReference type="STRING" id="228908.NEQ530"/>
<dbReference type="EnsemblBacteria" id="AAR39372">
    <property type="protein sequence ID" value="AAR39372"/>
    <property type="gene ID" value="NEQ530"/>
</dbReference>
<dbReference type="KEGG" id="neq:NEQ530"/>
<dbReference type="HOGENOM" id="CLU_071479_3_0_2"/>
<dbReference type="Proteomes" id="UP000000578">
    <property type="component" value="Chromosome"/>
</dbReference>
<dbReference type="GO" id="GO:0022625">
    <property type="term" value="C:cytosolic large ribosomal subunit"/>
    <property type="evidence" value="ECO:0007669"/>
    <property type="project" value="TreeGrafter"/>
</dbReference>
<dbReference type="GO" id="GO:0003735">
    <property type="term" value="F:structural constituent of ribosome"/>
    <property type="evidence" value="ECO:0007669"/>
    <property type="project" value="InterPro"/>
</dbReference>
<dbReference type="GO" id="GO:0006412">
    <property type="term" value="P:translation"/>
    <property type="evidence" value="ECO:0007669"/>
    <property type="project" value="UniProtKB-UniRule"/>
</dbReference>
<dbReference type="CDD" id="cd00513">
    <property type="entry name" value="Ribosomal_L32_L32e"/>
    <property type="match status" value="1"/>
</dbReference>
<dbReference type="HAMAP" id="MF_00810">
    <property type="entry name" value="Ribosomal_eL32"/>
    <property type="match status" value="1"/>
</dbReference>
<dbReference type="InterPro" id="IPR001515">
    <property type="entry name" value="Ribosomal_eL32"/>
</dbReference>
<dbReference type="InterPro" id="IPR023654">
    <property type="entry name" value="Ribosomal_eL32_arc"/>
</dbReference>
<dbReference type="InterPro" id="IPR036351">
    <property type="entry name" value="Ribosomal_eL32_sf"/>
</dbReference>
<dbReference type="NCBIfam" id="NF006332">
    <property type="entry name" value="PRK08562.1"/>
    <property type="match status" value="1"/>
</dbReference>
<dbReference type="PANTHER" id="PTHR23413">
    <property type="entry name" value="60S RIBOSOMAL PROTEIN L32 AND DNA-DIRECTED RNA POLYMERASE II, SUBUNIT N"/>
    <property type="match status" value="1"/>
</dbReference>
<dbReference type="PANTHER" id="PTHR23413:SF1">
    <property type="entry name" value="RIBOSOMAL PROTEIN L32"/>
    <property type="match status" value="1"/>
</dbReference>
<dbReference type="Pfam" id="PF01655">
    <property type="entry name" value="Ribosomal_L32e"/>
    <property type="match status" value="1"/>
</dbReference>
<dbReference type="SMART" id="SM01393">
    <property type="entry name" value="Ribosomal_L32e"/>
    <property type="match status" value="1"/>
</dbReference>
<dbReference type="SUPFAM" id="SSF52042">
    <property type="entry name" value="Ribosomal protein L32e"/>
    <property type="match status" value="1"/>
</dbReference>
<comment type="similarity">
    <text evidence="2">Belongs to the eukaryotic ribosomal protein eL32 family.</text>
</comment>
<feature type="chain" id="PRO_0000131157" description="Large ribosomal subunit protein eL32">
    <location>
        <begin position="1"/>
        <end position="135"/>
    </location>
</feature>
<feature type="region of interest" description="Disordered" evidence="1">
    <location>
        <begin position="51"/>
        <end position="77"/>
    </location>
</feature>
<organism>
    <name type="scientific">Nanoarchaeum equitans (strain Kin4-M)</name>
    <dbReference type="NCBI Taxonomy" id="228908"/>
    <lineage>
        <taxon>Archaea</taxon>
        <taxon>Nanobdellota</taxon>
        <taxon>Candidatus Nanoarchaeia</taxon>
        <taxon>Nanoarchaeales</taxon>
        <taxon>Nanoarchaeaceae</taxon>
        <taxon>Nanoarchaeum</taxon>
    </lineage>
</organism>
<name>RL32_NANEQ</name>